<comment type="function">
    <text evidence="1">Transaldolase is important for the balance of metabolites in the pentose-phosphate pathway.</text>
</comment>
<comment type="catalytic activity">
    <reaction evidence="1">
        <text>D-sedoheptulose 7-phosphate + D-glyceraldehyde 3-phosphate = D-erythrose 4-phosphate + beta-D-fructose 6-phosphate</text>
        <dbReference type="Rhea" id="RHEA:17053"/>
        <dbReference type="ChEBI" id="CHEBI:16897"/>
        <dbReference type="ChEBI" id="CHEBI:57483"/>
        <dbReference type="ChEBI" id="CHEBI:57634"/>
        <dbReference type="ChEBI" id="CHEBI:59776"/>
        <dbReference type="EC" id="2.2.1.2"/>
    </reaction>
</comment>
<comment type="pathway">
    <text evidence="1">Carbohydrate degradation; pentose phosphate pathway; D-glyceraldehyde 3-phosphate and beta-D-fructose 6-phosphate from D-ribose 5-phosphate and D-xylulose 5-phosphate (non-oxidative stage): step 2/3.</text>
</comment>
<comment type="subcellular location">
    <subcellularLocation>
        <location evidence="1">Cytoplasm</location>
    </subcellularLocation>
</comment>
<comment type="similarity">
    <text evidence="1">Belongs to the transaldolase family. Type 3B subfamily.</text>
</comment>
<sequence>MKFFIDTANLDEIKAAAELGLLDGVTTNPSLIAKIVADPANFTYEDFKKHIAAICEIVDGPISAEVTTLEAEEMIREGEDLASIHENVVVKCPVTLEGLKAIRHFSSEGIRTNATLVFSPSQALLAAKAGATYVSPFIGRLDDISTDGMALVEQIVAIYDNYGYHTEVIVASVRHPQHVVEAALAGADIATIPFGVIKQLVRHPLTDAGLTKFMEDASVMKKS</sequence>
<feature type="chain" id="PRO_1000126345" description="Probable transaldolase">
    <location>
        <begin position="1"/>
        <end position="223"/>
    </location>
</feature>
<feature type="active site" description="Schiff-base intermediate with substrate" evidence="1">
    <location>
        <position position="91"/>
    </location>
</feature>
<evidence type="ECO:0000255" key="1">
    <source>
        <dbReference type="HAMAP-Rule" id="MF_00494"/>
    </source>
</evidence>
<organism>
    <name type="scientific">Prosthecochloris aestuarii (strain DSM 271 / SK 413)</name>
    <dbReference type="NCBI Taxonomy" id="290512"/>
    <lineage>
        <taxon>Bacteria</taxon>
        <taxon>Pseudomonadati</taxon>
        <taxon>Chlorobiota</taxon>
        <taxon>Chlorobiia</taxon>
        <taxon>Chlorobiales</taxon>
        <taxon>Chlorobiaceae</taxon>
        <taxon>Prosthecochloris</taxon>
    </lineage>
</organism>
<reference key="1">
    <citation type="submission" date="2008-06" db="EMBL/GenBank/DDBJ databases">
        <title>Complete sequence of chromosome of Prosthecochloris aestuarii DSM 271.</title>
        <authorList>
            <consortium name="US DOE Joint Genome Institute"/>
            <person name="Lucas S."/>
            <person name="Copeland A."/>
            <person name="Lapidus A."/>
            <person name="Glavina del Rio T."/>
            <person name="Dalin E."/>
            <person name="Tice H."/>
            <person name="Bruce D."/>
            <person name="Goodwin L."/>
            <person name="Pitluck S."/>
            <person name="Schmutz J."/>
            <person name="Larimer F."/>
            <person name="Land M."/>
            <person name="Hauser L."/>
            <person name="Kyrpides N."/>
            <person name="Anderson I."/>
            <person name="Liu Z."/>
            <person name="Li T."/>
            <person name="Zhao F."/>
            <person name="Overmann J."/>
            <person name="Bryant D.A."/>
            <person name="Richardson P."/>
        </authorList>
    </citation>
    <scope>NUCLEOTIDE SEQUENCE [LARGE SCALE GENOMIC DNA]</scope>
    <source>
        <strain>DSM 271 / SK 413</strain>
    </source>
</reference>
<name>TAL_PROA2</name>
<gene>
    <name evidence="1" type="primary">tal</name>
    <name type="ordered locus">Paes_2230</name>
</gene>
<dbReference type="EC" id="2.2.1.2" evidence="1"/>
<dbReference type="EMBL" id="CP001108">
    <property type="protein sequence ID" value="ACF47232.1"/>
    <property type="molecule type" value="Genomic_DNA"/>
</dbReference>
<dbReference type="RefSeq" id="WP_012506762.1">
    <property type="nucleotide sequence ID" value="NC_011059.1"/>
</dbReference>
<dbReference type="SMR" id="B4S6D0"/>
<dbReference type="STRING" id="290512.Paes_2230"/>
<dbReference type="KEGG" id="paa:Paes_2230"/>
<dbReference type="eggNOG" id="COG0176">
    <property type="taxonomic scope" value="Bacteria"/>
</dbReference>
<dbReference type="HOGENOM" id="CLU_079764_0_0_10"/>
<dbReference type="UniPathway" id="UPA00115">
    <property type="reaction ID" value="UER00414"/>
</dbReference>
<dbReference type="Proteomes" id="UP000002725">
    <property type="component" value="Chromosome"/>
</dbReference>
<dbReference type="GO" id="GO:0005737">
    <property type="term" value="C:cytoplasm"/>
    <property type="evidence" value="ECO:0007669"/>
    <property type="project" value="UniProtKB-SubCell"/>
</dbReference>
<dbReference type="GO" id="GO:0016832">
    <property type="term" value="F:aldehyde-lyase activity"/>
    <property type="evidence" value="ECO:0007669"/>
    <property type="project" value="InterPro"/>
</dbReference>
<dbReference type="GO" id="GO:0004801">
    <property type="term" value="F:transaldolase activity"/>
    <property type="evidence" value="ECO:0007669"/>
    <property type="project" value="UniProtKB-UniRule"/>
</dbReference>
<dbReference type="GO" id="GO:0005975">
    <property type="term" value="P:carbohydrate metabolic process"/>
    <property type="evidence" value="ECO:0007669"/>
    <property type="project" value="InterPro"/>
</dbReference>
<dbReference type="GO" id="GO:0006098">
    <property type="term" value="P:pentose-phosphate shunt"/>
    <property type="evidence" value="ECO:0007669"/>
    <property type="project" value="UniProtKB-UniRule"/>
</dbReference>
<dbReference type="CDD" id="cd00956">
    <property type="entry name" value="Transaldolase_FSA"/>
    <property type="match status" value="1"/>
</dbReference>
<dbReference type="FunFam" id="3.20.20.70:FF:000018">
    <property type="entry name" value="Probable transaldolase"/>
    <property type="match status" value="1"/>
</dbReference>
<dbReference type="Gene3D" id="3.20.20.70">
    <property type="entry name" value="Aldolase class I"/>
    <property type="match status" value="1"/>
</dbReference>
<dbReference type="HAMAP" id="MF_00494">
    <property type="entry name" value="Transaldolase_3b"/>
    <property type="match status" value="1"/>
</dbReference>
<dbReference type="InterPro" id="IPR013785">
    <property type="entry name" value="Aldolase_TIM"/>
</dbReference>
<dbReference type="InterPro" id="IPR001585">
    <property type="entry name" value="TAL/FSA"/>
</dbReference>
<dbReference type="InterPro" id="IPR022999">
    <property type="entry name" value="Transaldolase_3B"/>
</dbReference>
<dbReference type="InterPro" id="IPR004731">
    <property type="entry name" value="Transaldolase_3B/F6P_aldolase"/>
</dbReference>
<dbReference type="InterPro" id="IPR018225">
    <property type="entry name" value="Transaldolase_AS"/>
</dbReference>
<dbReference type="InterPro" id="IPR033919">
    <property type="entry name" value="TSA/FSA_arc/bac"/>
</dbReference>
<dbReference type="NCBIfam" id="TIGR00875">
    <property type="entry name" value="fsa_talC_mipB"/>
    <property type="match status" value="1"/>
</dbReference>
<dbReference type="PANTHER" id="PTHR10683:SF40">
    <property type="entry name" value="FRUCTOSE-6-PHOSPHATE ALDOLASE 1-RELATED"/>
    <property type="match status" value="1"/>
</dbReference>
<dbReference type="PANTHER" id="PTHR10683">
    <property type="entry name" value="TRANSALDOLASE"/>
    <property type="match status" value="1"/>
</dbReference>
<dbReference type="Pfam" id="PF00923">
    <property type="entry name" value="TAL_FSA"/>
    <property type="match status" value="1"/>
</dbReference>
<dbReference type="SUPFAM" id="SSF51569">
    <property type="entry name" value="Aldolase"/>
    <property type="match status" value="1"/>
</dbReference>
<dbReference type="PROSITE" id="PS01054">
    <property type="entry name" value="TRANSALDOLASE_1"/>
    <property type="match status" value="1"/>
</dbReference>
<accession>B4S6D0</accession>
<protein>
    <recommendedName>
        <fullName evidence="1">Probable transaldolase</fullName>
        <ecNumber evidence="1">2.2.1.2</ecNumber>
    </recommendedName>
</protein>
<keyword id="KW-0963">Cytoplasm</keyword>
<keyword id="KW-0570">Pentose shunt</keyword>
<keyword id="KW-0704">Schiff base</keyword>
<keyword id="KW-0808">Transferase</keyword>
<proteinExistence type="inferred from homology"/>